<feature type="chain" id="PRO_0000376542" description="Probable cell division protein WhiA">
    <location>
        <begin position="1"/>
        <end position="315"/>
    </location>
</feature>
<feature type="DNA-binding region" description="H-T-H motif" evidence="1">
    <location>
        <begin position="278"/>
        <end position="312"/>
    </location>
</feature>
<reference key="1">
    <citation type="journal article" date="2006" name="Proc. Natl. Acad. Sci. U.S.A.">
        <title>Comparative genomics of the lactic acid bacteria.</title>
        <authorList>
            <person name="Makarova K.S."/>
            <person name="Slesarev A."/>
            <person name="Wolf Y.I."/>
            <person name="Sorokin A."/>
            <person name="Mirkin B."/>
            <person name="Koonin E.V."/>
            <person name="Pavlov A."/>
            <person name="Pavlova N."/>
            <person name="Karamychev V."/>
            <person name="Polouchine N."/>
            <person name="Shakhova V."/>
            <person name="Grigoriev I."/>
            <person name="Lou Y."/>
            <person name="Rohksar D."/>
            <person name="Lucas S."/>
            <person name="Huang K."/>
            <person name="Goodstein D.M."/>
            <person name="Hawkins T."/>
            <person name="Plengvidhya V."/>
            <person name="Welker D."/>
            <person name="Hughes J."/>
            <person name="Goh Y."/>
            <person name="Benson A."/>
            <person name="Baldwin K."/>
            <person name="Lee J.-H."/>
            <person name="Diaz-Muniz I."/>
            <person name="Dosti B."/>
            <person name="Smeianov V."/>
            <person name="Wechter W."/>
            <person name="Barabote R."/>
            <person name="Lorca G."/>
            <person name="Altermann E."/>
            <person name="Barrangou R."/>
            <person name="Ganesan B."/>
            <person name="Xie Y."/>
            <person name="Rawsthorne H."/>
            <person name="Tamir D."/>
            <person name="Parker C."/>
            <person name="Breidt F."/>
            <person name="Broadbent J.R."/>
            <person name="Hutkins R."/>
            <person name="O'Sullivan D."/>
            <person name="Steele J."/>
            <person name="Unlu G."/>
            <person name="Saier M.H. Jr."/>
            <person name="Klaenhammer T."/>
            <person name="Richardson P."/>
            <person name="Kozyavkin S."/>
            <person name="Weimer B.C."/>
            <person name="Mills D.A."/>
        </authorList>
    </citation>
    <scope>NUCLEOTIDE SEQUENCE [LARGE SCALE GENOMIC DNA]</scope>
    <source>
        <strain>ATCC BAA-331 / PSU-1</strain>
    </source>
</reference>
<name>WHIA_OENOB</name>
<protein>
    <recommendedName>
        <fullName evidence="1">Probable cell division protein WhiA</fullName>
    </recommendedName>
</protein>
<gene>
    <name evidence="1" type="primary">whiA</name>
    <name type="ordered locus">OEOE_0569</name>
</gene>
<proteinExistence type="inferred from homology"/>
<organism>
    <name type="scientific">Oenococcus oeni (strain ATCC BAA-331 / PSU-1)</name>
    <dbReference type="NCBI Taxonomy" id="203123"/>
    <lineage>
        <taxon>Bacteria</taxon>
        <taxon>Bacillati</taxon>
        <taxon>Bacillota</taxon>
        <taxon>Bacilli</taxon>
        <taxon>Lactobacillales</taxon>
        <taxon>Lactobacillaceae</taxon>
        <taxon>Oenococcus</taxon>
    </lineage>
</organism>
<accession>Q04GA9</accession>
<comment type="function">
    <text evidence="1">Involved in cell division and chromosome segregation.</text>
</comment>
<comment type="similarity">
    <text evidence="1">Belongs to the WhiA family.</text>
</comment>
<evidence type="ECO:0000255" key="1">
    <source>
        <dbReference type="HAMAP-Rule" id="MF_01420"/>
    </source>
</evidence>
<dbReference type="EMBL" id="CP000411">
    <property type="protein sequence ID" value="ABJ56513.1"/>
    <property type="molecule type" value="Genomic_DNA"/>
</dbReference>
<dbReference type="RefSeq" id="WP_002817245.1">
    <property type="nucleotide sequence ID" value="NC_008528.1"/>
</dbReference>
<dbReference type="SMR" id="Q04GA9"/>
<dbReference type="STRING" id="203123.OEOE_0569"/>
<dbReference type="GeneID" id="75065391"/>
<dbReference type="KEGG" id="ooe:OEOE_0569"/>
<dbReference type="eggNOG" id="COG1481">
    <property type="taxonomic scope" value="Bacteria"/>
</dbReference>
<dbReference type="HOGENOM" id="CLU_053282_1_0_9"/>
<dbReference type="Proteomes" id="UP000000774">
    <property type="component" value="Chromosome"/>
</dbReference>
<dbReference type="GO" id="GO:0003677">
    <property type="term" value="F:DNA binding"/>
    <property type="evidence" value="ECO:0007669"/>
    <property type="project" value="UniProtKB-UniRule"/>
</dbReference>
<dbReference type="GO" id="GO:0051301">
    <property type="term" value="P:cell division"/>
    <property type="evidence" value="ECO:0007669"/>
    <property type="project" value="UniProtKB-UniRule"/>
</dbReference>
<dbReference type="GO" id="GO:0043937">
    <property type="term" value="P:regulation of sporulation"/>
    <property type="evidence" value="ECO:0007669"/>
    <property type="project" value="InterPro"/>
</dbReference>
<dbReference type="Gene3D" id="3.10.28.10">
    <property type="entry name" value="Homing endonucleases"/>
    <property type="match status" value="1"/>
</dbReference>
<dbReference type="HAMAP" id="MF_01420">
    <property type="entry name" value="HTH_type_WhiA"/>
    <property type="match status" value="1"/>
</dbReference>
<dbReference type="InterPro" id="IPR027434">
    <property type="entry name" value="Homing_endonucl"/>
</dbReference>
<dbReference type="InterPro" id="IPR018478">
    <property type="entry name" value="Sporu_reg_WhiA_N_dom"/>
</dbReference>
<dbReference type="InterPro" id="IPR003802">
    <property type="entry name" value="Sporulation_regulator_WhiA"/>
</dbReference>
<dbReference type="InterPro" id="IPR023054">
    <property type="entry name" value="Sporulation_regulator_WhiA_C"/>
</dbReference>
<dbReference type="InterPro" id="IPR039518">
    <property type="entry name" value="WhiA_LAGLIDADG_dom"/>
</dbReference>
<dbReference type="NCBIfam" id="TIGR00647">
    <property type="entry name" value="DNA_bind_WhiA"/>
    <property type="match status" value="1"/>
</dbReference>
<dbReference type="PANTHER" id="PTHR37307">
    <property type="entry name" value="CELL DIVISION PROTEIN WHIA-RELATED"/>
    <property type="match status" value="1"/>
</dbReference>
<dbReference type="PANTHER" id="PTHR37307:SF1">
    <property type="entry name" value="CELL DIVISION PROTEIN WHIA-RELATED"/>
    <property type="match status" value="1"/>
</dbReference>
<dbReference type="Pfam" id="PF02650">
    <property type="entry name" value="HTH_WhiA"/>
    <property type="match status" value="1"/>
</dbReference>
<dbReference type="Pfam" id="PF14527">
    <property type="entry name" value="LAGLIDADG_WhiA"/>
    <property type="match status" value="1"/>
</dbReference>
<dbReference type="Pfam" id="PF10298">
    <property type="entry name" value="WhiA_N"/>
    <property type="match status" value="1"/>
</dbReference>
<dbReference type="SUPFAM" id="SSF55608">
    <property type="entry name" value="Homing endonucleases"/>
    <property type="match status" value="1"/>
</dbReference>
<keyword id="KW-0131">Cell cycle</keyword>
<keyword id="KW-0132">Cell division</keyword>
<keyword id="KW-0238">DNA-binding</keyword>
<keyword id="KW-1185">Reference proteome</keyword>
<sequence>MTFTQQVKKELSILPINVKTSKSELSAIFRLNGIYHLGTAVGNTLEVQTQNPASARRTYQLLSQTYEADIQTNIERGGSAKIFGLHRYGVITMKQADQILADIQLDPFSSDRRVPEVFLNSQAKQQAFLRAAFLSTGSVNAPNSKNYHLEISAADEDLIEQIFSIMNNRNFNLGAKIADRRNKLIVYLKTGERISDFLSIIQATSSMLHFEDARIMSDMRNSANRLANADNANVTRMAEAAERQYEAMDFLRQQNRLDNLPEKLKIVADLRLKNPEASLSDLAGMIEGQELTKSGINHRMRKLMQIVKELNHKKV</sequence>